<proteinExistence type="inferred from homology"/>
<sequence>MSMLRLYTRVLQLLGGEARLGWILAFANLLLAGAQFAEPVLFGRIVDVLSGNLSTGALQTSVASPWPLLGAWVAFGLFTILCSAAVALHADRLAHRQRQAILTSYFEHIMQLPLTYHTGTHSGRLMKVMLQGTDALWRLWLGFFREHFAAILSLVVLLPLALYINWRLAILLFILCVVFTVLTTLVVHKTYSMQGEVEEQYSDLSARASDALGNVALVQSFVRIDAEVQGLRFVADRLLALQMPVLSWWALVTVITRASTTITVLAIFTVGIALHEQGLTSVGEIVMFVSFATLLIQKLEQVVSFINSVFMEAPRLQEFFNVLDAVPAVRDRPDAVDPERLQGLVEFKDVSFSYDGKRPAVADLSFTARPGETIALVGATGAGKSTAIALLHRAFDPQSGVIRIDGLDVRDLTLAGLRRNIGVVFQEALLFNRSIADNLRVGKPDATEEEMRTAASRAQALDFIERSEQKFDTNAGERGRMLSGGERQRLSIARALLKDPPILILDEATSALDAVTEAKVNLALDEVMKGRTTFVIAHRLSTIRHATRILVFEAGRVIESGTFDELLARQGHFAALARAQFMVQETSRANMAAPLEHAASAKIS</sequence>
<accession>Q20Z38</accession>
<keyword id="KW-0067">ATP-binding</keyword>
<keyword id="KW-0997">Cell inner membrane</keyword>
<keyword id="KW-1003">Cell membrane</keyword>
<keyword id="KW-0472">Membrane</keyword>
<keyword id="KW-0547">Nucleotide-binding</keyword>
<keyword id="KW-0762">Sugar transport</keyword>
<keyword id="KW-1278">Translocase</keyword>
<keyword id="KW-0812">Transmembrane</keyword>
<keyword id="KW-1133">Transmembrane helix</keyword>
<keyword id="KW-0813">Transport</keyword>
<organism>
    <name type="scientific">Rhodopseudomonas palustris (strain BisB18)</name>
    <dbReference type="NCBI Taxonomy" id="316056"/>
    <lineage>
        <taxon>Bacteria</taxon>
        <taxon>Pseudomonadati</taxon>
        <taxon>Pseudomonadota</taxon>
        <taxon>Alphaproteobacteria</taxon>
        <taxon>Hyphomicrobiales</taxon>
        <taxon>Nitrobacteraceae</taxon>
        <taxon>Rhodopseudomonas</taxon>
    </lineage>
</organism>
<reference key="1">
    <citation type="submission" date="2006-03" db="EMBL/GenBank/DDBJ databases">
        <title>Complete sequence of Rhodopseudomonas palustris BisB18.</title>
        <authorList>
            <consortium name="US DOE Joint Genome Institute"/>
            <person name="Copeland A."/>
            <person name="Lucas S."/>
            <person name="Lapidus A."/>
            <person name="Barry K."/>
            <person name="Detter J.C."/>
            <person name="Glavina del Rio T."/>
            <person name="Hammon N."/>
            <person name="Israni S."/>
            <person name="Dalin E."/>
            <person name="Tice H."/>
            <person name="Pitluck S."/>
            <person name="Chain P."/>
            <person name="Malfatti S."/>
            <person name="Shin M."/>
            <person name="Vergez L."/>
            <person name="Schmutz J."/>
            <person name="Larimer F."/>
            <person name="Land M."/>
            <person name="Hauser L."/>
            <person name="Pelletier D.A."/>
            <person name="Kyrpides N."/>
            <person name="Anderson I."/>
            <person name="Oda Y."/>
            <person name="Harwood C.S."/>
            <person name="Richardson P."/>
        </authorList>
    </citation>
    <scope>NUCLEOTIDE SEQUENCE [LARGE SCALE GENOMIC DNA]</scope>
    <source>
        <strain>BisB18</strain>
    </source>
</reference>
<gene>
    <name evidence="2" type="primary">ndvA</name>
    <name type="ordered locus">RPC_4072</name>
</gene>
<protein>
    <recommendedName>
        <fullName evidence="2">Beta-(1--&gt;2)glucan export ATP-binding/permease protein NdvA</fullName>
        <ecNumber evidence="2">7.5.2.3</ecNumber>
    </recommendedName>
</protein>
<feature type="chain" id="PRO_0000290254" description="Beta-(1--&gt;2)glucan export ATP-binding/permease protein NdvA">
    <location>
        <begin position="1"/>
        <end position="604"/>
    </location>
</feature>
<feature type="transmembrane region" description="Helical" evidence="2">
    <location>
        <begin position="22"/>
        <end position="42"/>
    </location>
</feature>
<feature type="transmembrane region" description="Helical" evidence="2">
    <location>
        <begin position="68"/>
        <end position="88"/>
    </location>
</feature>
<feature type="transmembrane region" description="Helical" evidence="2">
    <location>
        <begin position="146"/>
        <end position="166"/>
    </location>
</feature>
<feature type="transmembrane region" description="Helical" evidence="2">
    <location>
        <begin position="168"/>
        <end position="188"/>
    </location>
</feature>
<feature type="transmembrane region" description="Helical" evidence="2">
    <location>
        <begin position="238"/>
        <end position="258"/>
    </location>
</feature>
<feature type="transmembrane region" description="Helical" evidence="2">
    <location>
        <begin position="285"/>
        <end position="305"/>
    </location>
</feature>
<feature type="domain" description="ABC transmembrane type-1" evidence="2">
    <location>
        <begin position="21"/>
        <end position="311"/>
    </location>
</feature>
<feature type="domain" description="ABC transporter" evidence="2">
    <location>
        <begin position="345"/>
        <end position="579"/>
    </location>
</feature>
<feature type="binding site" evidence="2">
    <location>
        <begin position="378"/>
        <end position="385"/>
    </location>
    <ligand>
        <name>ATP</name>
        <dbReference type="ChEBI" id="CHEBI:30616"/>
    </ligand>
</feature>
<name>NDVA_RHOPB</name>
<dbReference type="EC" id="7.5.2.3" evidence="2"/>
<dbReference type="EMBL" id="CP000301">
    <property type="protein sequence ID" value="ABD89598.1"/>
    <property type="molecule type" value="Genomic_DNA"/>
</dbReference>
<dbReference type="SMR" id="Q20Z38"/>
<dbReference type="STRING" id="316056.RPC_4072"/>
<dbReference type="KEGG" id="rpc:RPC_4072"/>
<dbReference type="eggNOG" id="COG1132">
    <property type="taxonomic scope" value="Bacteria"/>
</dbReference>
<dbReference type="HOGENOM" id="CLU_000604_84_5_5"/>
<dbReference type="OrthoDB" id="9804259at2"/>
<dbReference type="GO" id="GO:0005886">
    <property type="term" value="C:plasma membrane"/>
    <property type="evidence" value="ECO:0007669"/>
    <property type="project" value="UniProtKB-SubCell"/>
</dbReference>
<dbReference type="GO" id="GO:0015441">
    <property type="term" value="F:ABC-type beta-glucan transporter activity"/>
    <property type="evidence" value="ECO:0007669"/>
    <property type="project" value="UniProtKB-EC"/>
</dbReference>
<dbReference type="GO" id="GO:0015421">
    <property type="term" value="F:ABC-type oligopeptide transporter activity"/>
    <property type="evidence" value="ECO:0007669"/>
    <property type="project" value="TreeGrafter"/>
</dbReference>
<dbReference type="GO" id="GO:0005524">
    <property type="term" value="F:ATP binding"/>
    <property type="evidence" value="ECO:0007669"/>
    <property type="project" value="UniProtKB-KW"/>
</dbReference>
<dbReference type="GO" id="GO:0016887">
    <property type="term" value="F:ATP hydrolysis activity"/>
    <property type="evidence" value="ECO:0007669"/>
    <property type="project" value="InterPro"/>
</dbReference>
<dbReference type="CDD" id="cd18562">
    <property type="entry name" value="ABC_6TM_NdvA_beta-glucan_exporter_like"/>
    <property type="match status" value="1"/>
</dbReference>
<dbReference type="FunFam" id="3.40.50.300:FF:000221">
    <property type="entry name" value="Multidrug ABC transporter ATP-binding protein"/>
    <property type="match status" value="1"/>
</dbReference>
<dbReference type="Gene3D" id="1.20.1560.10">
    <property type="entry name" value="ABC transporter type 1, transmembrane domain"/>
    <property type="match status" value="1"/>
</dbReference>
<dbReference type="Gene3D" id="3.40.50.300">
    <property type="entry name" value="P-loop containing nucleotide triphosphate hydrolases"/>
    <property type="match status" value="1"/>
</dbReference>
<dbReference type="InterPro" id="IPR003593">
    <property type="entry name" value="AAA+_ATPase"/>
</dbReference>
<dbReference type="InterPro" id="IPR011527">
    <property type="entry name" value="ABC1_TM_dom"/>
</dbReference>
<dbReference type="InterPro" id="IPR036640">
    <property type="entry name" value="ABC1_TM_sf"/>
</dbReference>
<dbReference type="InterPro" id="IPR003439">
    <property type="entry name" value="ABC_transporter-like_ATP-bd"/>
</dbReference>
<dbReference type="InterPro" id="IPR017871">
    <property type="entry name" value="ABC_transporter-like_CS"/>
</dbReference>
<dbReference type="InterPro" id="IPR027417">
    <property type="entry name" value="P-loop_NTPase"/>
</dbReference>
<dbReference type="InterPro" id="IPR039421">
    <property type="entry name" value="Type_1_exporter"/>
</dbReference>
<dbReference type="NCBIfam" id="NF010178">
    <property type="entry name" value="PRK13657.1"/>
    <property type="match status" value="1"/>
</dbReference>
<dbReference type="PANTHER" id="PTHR43394:SF1">
    <property type="entry name" value="ATP-BINDING CASSETTE SUB-FAMILY B MEMBER 10, MITOCHONDRIAL"/>
    <property type="match status" value="1"/>
</dbReference>
<dbReference type="PANTHER" id="PTHR43394">
    <property type="entry name" value="ATP-DEPENDENT PERMEASE MDL1, MITOCHONDRIAL"/>
    <property type="match status" value="1"/>
</dbReference>
<dbReference type="Pfam" id="PF00664">
    <property type="entry name" value="ABC_membrane"/>
    <property type="match status" value="1"/>
</dbReference>
<dbReference type="Pfam" id="PF00005">
    <property type="entry name" value="ABC_tran"/>
    <property type="match status" value="1"/>
</dbReference>
<dbReference type="SMART" id="SM00382">
    <property type="entry name" value="AAA"/>
    <property type="match status" value="1"/>
</dbReference>
<dbReference type="SUPFAM" id="SSF90123">
    <property type="entry name" value="ABC transporter transmembrane region"/>
    <property type="match status" value="1"/>
</dbReference>
<dbReference type="SUPFAM" id="SSF52540">
    <property type="entry name" value="P-loop containing nucleoside triphosphate hydrolases"/>
    <property type="match status" value="1"/>
</dbReference>
<dbReference type="PROSITE" id="PS50929">
    <property type="entry name" value="ABC_TM1F"/>
    <property type="match status" value="1"/>
</dbReference>
<dbReference type="PROSITE" id="PS00211">
    <property type="entry name" value="ABC_TRANSPORTER_1"/>
    <property type="match status" value="1"/>
</dbReference>
<dbReference type="PROSITE" id="PS50893">
    <property type="entry name" value="ABC_TRANSPORTER_2"/>
    <property type="match status" value="1"/>
</dbReference>
<dbReference type="PROSITE" id="PS51317">
    <property type="entry name" value="NDVA"/>
    <property type="match status" value="1"/>
</dbReference>
<evidence type="ECO:0000250" key="1"/>
<evidence type="ECO:0000255" key="2">
    <source>
        <dbReference type="HAMAP-Rule" id="MF_01728"/>
    </source>
</evidence>
<comment type="function">
    <text evidence="1">Involved in beta-(1--&gt;2)glucan export. Transmembrane domains (TMD) form a pore in the inner membrane and the ATP-binding domain (NBD) is responsible for energy generation (By similarity).</text>
</comment>
<comment type="catalytic activity">
    <reaction evidence="2">
        <text>[(1-&gt;2)-beta-D-glucosyl](n)(in) + ATP + H2O = [(1-&gt;2)-beta-D-glucosyl](n)(out) + ADP + phosphate + H(+)</text>
        <dbReference type="Rhea" id="RHEA:18453"/>
        <dbReference type="Rhea" id="RHEA-COMP:11881"/>
        <dbReference type="ChEBI" id="CHEBI:15377"/>
        <dbReference type="ChEBI" id="CHEBI:15378"/>
        <dbReference type="ChEBI" id="CHEBI:27517"/>
        <dbReference type="ChEBI" id="CHEBI:30616"/>
        <dbReference type="ChEBI" id="CHEBI:43474"/>
        <dbReference type="ChEBI" id="CHEBI:456216"/>
        <dbReference type="EC" id="7.5.2.3"/>
    </reaction>
</comment>
<comment type="subunit">
    <text evidence="2">Homodimer.</text>
</comment>
<comment type="subcellular location">
    <subcellularLocation>
        <location evidence="2">Cell inner membrane</location>
        <topology evidence="2">Multi-pass membrane protein</topology>
    </subcellularLocation>
</comment>
<comment type="domain">
    <text>In NdvA the ATP-binding domain (NBD) and the transmembrane domain (TMD) are fused.</text>
</comment>
<comment type="similarity">
    <text evidence="2">Belongs to the ABC transporter superfamily. Beta-(1--&gt;2)glucan exporter (TC 3.A.1.108.1) family.</text>
</comment>